<geneLocation type="chloroplast"/>
<dbReference type="EMBL" id="DQ226511">
    <property type="protein sequence ID" value="ABB20991.1"/>
    <property type="molecule type" value="Genomic_DNA"/>
</dbReference>
<dbReference type="RefSeq" id="YP_762295.1">
    <property type="nucleotide sequence ID" value="NC_008359.1"/>
</dbReference>
<dbReference type="SMR" id="Q09WY3"/>
<dbReference type="GeneID" id="4290631"/>
<dbReference type="GO" id="GO:0009507">
    <property type="term" value="C:chloroplast"/>
    <property type="evidence" value="ECO:0007669"/>
    <property type="project" value="UniProtKB-SubCell"/>
</dbReference>
<dbReference type="GO" id="GO:1990904">
    <property type="term" value="C:ribonucleoprotein complex"/>
    <property type="evidence" value="ECO:0007669"/>
    <property type="project" value="UniProtKB-KW"/>
</dbReference>
<dbReference type="GO" id="GO:0005840">
    <property type="term" value="C:ribosome"/>
    <property type="evidence" value="ECO:0007669"/>
    <property type="project" value="UniProtKB-KW"/>
</dbReference>
<dbReference type="GO" id="GO:0003735">
    <property type="term" value="F:structural constituent of ribosome"/>
    <property type="evidence" value="ECO:0007669"/>
    <property type="project" value="InterPro"/>
</dbReference>
<dbReference type="GO" id="GO:0006412">
    <property type="term" value="P:translation"/>
    <property type="evidence" value="ECO:0007669"/>
    <property type="project" value="UniProtKB-UniRule"/>
</dbReference>
<dbReference type="HAMAP" id="MF_00251">
    <property type="entry name" value="Ribosomal_bL36"/>
    <property type="match status" value="1"/>
</dbReference>
<dbReference type="InterPro" id="IPR000473">
    <property type="entry name" value="Ribosomal_bL36"/>
</dbReference>
<dbReference type="InterPro" id="IPR035977">
    <property type="entry name" value="Ribosomal_bL36_sp"/>
</dbReference>
<dbReference type="NCBIfam" id="TIGR01022">
    <property type="entry name" value="rpmJ_bact"/>
    <property type="match status" value="1"/>
</dbReference>
<dbReference type="PANTHER" id="PTHR42888">
    <property type="entry name" value="50S RIBOSOMAL PROTEIN L36, CHLOROPLASTIC"/>
    <property type="match status" value="1"/>
</dbReference>
<dbReference type="PANTHER" id="PTHR42888:SF1">
    <property type="entry name" value="LARGE RIBOSOMAL SUBUNIT PROTEIN BL36C"/>
    <property type="match status" value="1"/>
</dbReference>
<dbReference type="Pfam" id="PF00444">
    <property type="entry name" value="Ribosomal_L36"/>
    <property type="match status" value="1"/>
</dbReference>
<dbReference type="SUPFAM" id="SSF57840">
    <property type="entry name" value="Ribosomal protein L36"/>
    <property type="match status" value="1"/>
</dbReference>
<dbReference type="PROSITE" id="PS00828">
    <property type="entry name" value="RIBOSOMAL_L36"/>
    <property type="match status" value="1"/>
</dbReference>
<organism>
    <name type="scientific">Morus indica</name>
    <name type="common">Mulberry</name>
    <dbReference type="NCBI Taxonomy" id="248361"/>
    <lineage>
        <taxon>Eukaryota</taxon>
        <taxon>Viridiplantae</taxon>
        <taxon>Streptophyta</taxon>
        <taxon>Embryophyta</taxon>
        <taxon>Tracheophyta</taxon>
        <taxon>Spermatophyta</taxon>
        <taxon>Magnoliopsida</taxon>
        <taxon>eudicotyledons</taxon>
        <taxon>Gunneridae</taxon>
        <taxon>Pentapetalae</taxon>
        <taxon>rosids</taxon>
        <taxon>fabids</taxon>
        <taxon>Rosales</taxon>
        <taxon>Moraceae</taxon>
        <taxon>Moreae</taxon>
        <taxon>Morus</taxon>
    </lineage>
</organism>
<name>RK36_MORIN</name>
<accession>Q09WY3</accession>
<keyword id="KW-0150">Chloroplast</keyword>
<keyword id="KW-0934">Plastid</keyword>
<keyword id="KW-0687">Ribonucleoprotein</keyword>
<keyword id="KW-0689">Ribosomal protein</keyword>
<proteinExistence type="inferred from homology"/>
<comment type="subcellular location">
    <subcellularLocation>
        <location>Plastid</location>
        <location>Chloroplast</location>
    </subcellularLocation>
</comment>
<comment type="similarity">
    <text evidence="1">Belongs to the bacterial ribosomal protein bL36 family.</text>
</comment>
<protein>
    <recommendedName>
        <fullName evidence="1">Large ribosomal subunit protein bL36c</fullName>
    </recommendedName>
    <alternativeName>
        <fullName evidence="2">50S ribosomal protein L36, chloroplastic</fullName>
    </alternativeName>
</protein>
<evidence type="ECO:0000255" key="1">
    <source>
        <dbReference type="HAMAP-Rule" id="MF_00251"/>
    </source>
</evidence>
<evidence type="ECO:0000305" key="2"/>
<gene>
    <name evidence="1" type="primary">rpl36</name>
    <name type="ordered locus">MoinCp055</name>
</gene>
<feature type="chain" id="PRO_0000276823" description="Large ribosomal subunit protein bL36c">
    <location>
        <begin position="1"/>
        <end position="37"/>
    </location>
</feature>
<reference key="1">
    <citation type="submission" date="2005-09" db="EMBL/GenBank/DDBJ databases">
        <title>The chloroplast genome of mulberry: structural features and comparative analysis.</title>
        <authorList>
            <person name="Ravi V."/>
            <person name="Khurana J.P."/>
            <person name="Tyagi A.K."/>
            <person name="Khurana P."/>
        </authorList>
    </citation>
    <scope>NUCLEOTIDE SEQUENCE [LARGE SCALE GENOMIC DNA]</scope>
    <source>
        <strain>cv. K2</strain>
    </source>
</reference>
<sequence>MKIRASVRKICEKCRLIRRRGRIIVICSNPRHKQRQG</sequence>